<comment type="function">
    <text evidence="4 5 6 7">During fertilization, required on male (minus) gametes for their fusion with female (plus) gametes (PubMed:18367645, PubMed:20335357, PubMed:25655701, PubMed:28235200). Required for membrane fusion, but not for the initial adhesion between gametes (PubMed:18367645, PubMed:25655701, PubMed:28235200). Inserts (via its extracellular domain) into lipid membranes (in vitro) (PubMed:28235200). Probably initiates the fusion of gamete cell membranes by inserting its extracellular domain into the cell membrane of a female gamete (PubMed:28235200).</text>
</comment>
<comment type="subunit">
    <text evidence="7">Monomer. Homotrimer. Membrane contact and insertion (via its extracellular domain) into a lipid membrane probably triggers trimerization.</text>
</comment>
<comment type="subcellular location">
    <subcellularLocation>
        <location evidence="5 6 7">Cell membrane</location>
        <topology evidence="7 13 14">Single-pass type I membrane protein</topology>
    </subcellularLocation>
    <subcellularLocation>
        <location evidence="6 7">Cell projection</location>
    </subcellularLocation>
    <subcellularLocation>
        <location evidence="6">Cytoplasmic vesicle membrane</location>
    </subcellularLocation>
    <text evidence="6">In male gametes, detected both in cytoplasmic vesicles and on cell projections called mating structures at the cell membrane.</text>
</comment>
<comment type="developmental stage">
    <text evidence="3 5 6 7">Detected on male (minus) gametes (at protein level) (PubMed:20335357, PubMed:25655701, PubMed:28235200). Detected at low levels in vegetative cells. Highly expressed in male (minus) gametes, with low expression in female (plus) gametes (PubMed:16378100).</text>
</comment>
<comment type="domain">
    <text evidence="6 7">Both the cytoplasmic and the extracellular domain are required for normal trafficking to the cell surface, and thus for fertilization (PubMed:25655701). The extracellular domain can insert itself into lipid membranes, probably as a trimer (PubMed:28235200). The extracellular domain has structural similarity to class II viral fusion proteins.</text>
</comment>
<comment type="PTM">
    <text evidence="5 12">The protein present at the cell membrane is rapidly degraded after fusion between male (minus) and female (plus) gametes, contrary to the protein present in intracellular pools (PubMed:20335357). This may represent a mechanism to avoid fusion of several male gametes with a single female gamete (Probable).</text>
</comment>
<comment type="PTM">
    <text evidence="5">N-glycosylated.</text>
</comment>
<comment type="disruption phenotype">
    <text evidence="4">No effect on normal adhesion of male (minus) gametes and female (plus) gametes, but the gametes fail to fuse and to give rise to quadriflagellated zygotes.</text>
</comment>
<comment type="miscellaneous">
    <text evidence="7 10">HAP2/GCS1 family members mediate membrane fusion between gametes in a broad range of eukaryotes, ranging from algae and higher plants to protozoans and cnidaria, suggesting they are derived from an ancestral gamete fusogen (PubMed:20080406). They function similar to viral fusogens, by inserting part of their extracellular domain into the lipid bilayer of an adjoining cell (PubMed:28235200).</text>
</comment>
<comment type="similarity">
    <text evidence="12">Belongs to the HAP2/GCS1 family.</text>
</comment>
<comment type="online information" name="Protein Spotlight">
    <link uri="https://www.proteinspotlight.org/back_issues/193/"/>
    <text>Becoming one - Issue 193 of July 2017</text>
</comment>
<organism evidence="15">
    <name type="scientific">Chlamydomonas reinhardtii</name>
    <name type="common">Chlamydomonas smithii</name>
    <dbReference type="NCBI Taxonomy" id="3055"/>
    <lineage>
        <taxon>Eukaryota</taxon>
        <taxon>Viridiplantae</taxon>
        <taxon>Chlorophyta</taxon>
        <taxon>core chlorophytes</taxon>
        <taxon>Chlorophyceae</taxon>
        <taxon>CS clade</taxon>
        <taxon>Chlamydomonadales</taxon>
        <taxon>Chlamydomonadaceae</taxon>
        <taxon>Chlamydomonas</taxon>
    </lineage>
</organism>
<gene>
    <name evidence="9 11 15" type="primary">HAP2</name>
    <name evidence="11" type="synonym">GCS1</name>
</gene>
<evidence type="ECO:0000255" key="1"/>
<evidence type="ECO:0000256" key="2">
    <source>
        <dbReference type="SAM" id="MobiDB-lite"/>
    </source>
</evidence>
<evidence type="ECO:0000269" key="3">
    <source>
    </source>
</evidence>
<evidence type="ECO:0000269" key="4">
    <source>
    </source>
</evidence>
<evidence type="ECO:0000269" key="5">
    <source>
    </source>
</evidence>
<evidence type="ECO:0000269" key="6">
    <source>
    </source>
</evidence>
<evidence type="ECO:0000269" key="7">
    <source>
    </source>
</evidence>
<evidence type="ECO:0000303" key="8">
    <source>
    </source>
</evidence>
<evidence type="ECO:0000303" key="9">
    <source>
    </source>
</evidence>
<evidence type="ECO:0000303" key="10">
    <source>
    </source>
</evidence>
<evidence type="ECO:0000303" key="11">
    <source>
    </source>
</evidence>
<evidence type="ECO:0000305" key="12"/>
<evidence type="ECO:0000305" key="13">
    <source>
    </source>
</evidence>
<evidence type="ECO:0000305" key="14">
    <source>
    </source>
</evidence>
<evidence type="ECO:0000312" key="15">
    <source>
        <dbReference type="EMBL" id="ABO29824.2"/>
    </source>
</evidence>
<evidence type="ECO:0000312" key="16">
    <source>
        <dbReference type="EMBL" id="BAE71145.2"/>
    </source>
</evidence>
<evidence type="ECO:0007744" key="17">
    <source>
        <dbReference type="PDB" id="5MF1"/>
    </source>
</evidence>
<evidence type="ECO:0007829" key="18">
    <source>
        <dbReference type="PDB" id="5MF1"/>
    </source>
</evidence>
<evidence type="ECO:0007829" key="19">
    <source>
        <dbReference type="PDB" id="6DBS"/>
    </source>
</evidence>
<evidence type="ECO:0007829" key="20">
    <source>
        <dbReference type="PDB" id="6E18"/>
    </source>
</evidence>
<accession>A4GRC6</accession>
<accession>Q2PGG4</accession>
<protein>
    <recommendedName>
        <fullName>Hapless 2</fullName>
        <shortName evidence="9">HAP2</shortName>
    </recommendedName>
    <alternativeName>
        <fullName evidence="8">Generative cell specific-1</fullName>
    </alternativeName>
</protein>
<dbReference type="EMBL" id="EF397563">
    <property type="protein sequence ID" value="ABO29824.2"/>
    <property type="molecule type" value="mRNA"/>
</dbReference>
<dbReference type="EMBL" id="DS496135">
    <property type="status" value="NOT_ANNOTATED_CDS"/>
    <property type="molecule type" value="Genomic_DNA"/>
</dbReference>
<dbReference type="EMBL" id="AB206813">
    <property type="protein sequence ID" value="BAE71145.2"/>
    <property type="molecule type" value="mRNA"/>
</dbReference>
<dbReference type="PDB" id="5MF1">
    <property type="method" value="X-ray"/>
    <property type="resolution" value="3.30 A"/>
    <property type="chains" value="A/B/C=23-592"/>
</dbReference>
<dbReference type="PDB" id="6DBS">
    <property type="method" value="X-ray"/>
    <property type="resolution" value="2.60 A"/>
    <property type="chains" value="A/B/C=23-582"/>
</dbReference>
<dbReference type="PDB" id="6E18">
    <property type="method" value="X-ray"/>
    <property type="resolution" value="2.60 A"/>
    <property type="chains" value="A=23-591"/>
</dbReference>
<dbReference type="PDBsum" id="5MF1"/>
<dbReference type="PDBsum" id="6DBS"/>
<dbReference type="PDBsum" id="6E18"/>
<dbReference type="SMR" id="A4GRC6"/>
<dbReference type="TCDB" id="1.N.3.1.6">
    <property type="family name" value="the hapless2 male gamete fusion factor (fusexin) family"/>
</dbReference>
<dbReference type="GlyCosmos" id="A4GRC6">
    <property type="glycosylation" value="2 sites, No reported glycans"/>
</dbReference>
<dbReference type="iPTMnet" id="A4GRC6"/>
<dbReference type="PaxDb" id="3055-EDP01230"/>
<dbReference type="eggNOG" id="ENOG502QREH">
    <property type="taxonomic scope" value="Eukaryota"/>
</dbReference>
<dbReference type="GO" id="GO:0031253">
    <property type="term" value="C:cell projection membrane"/>
    <property type="evidence" value="ECO:0000314"/>
    <property type="project" value="UniProtKB"/>
</dbReference>
<dbReference type="GO" id="GO:0031410">
    <property type="term" value="C:cytoplasmic vesicle"/>
    <property type="evidence" value="ECO:0000314"/>
    <property type="project" value="UniProtKB"/>
</dbReference>
<dbReference type="GO" id="GO:0030659">
    <property type="term" value="C:cytoplasmic vesicle membrane"/>
    <property type="evidence" value="ECO:0007669"/>
    <property type="project" value="UniProtKB-SubCell"/>
</dbReference>
<dbReference type="GO" id="GO:0005886">
    <property type="term" value="C:plasma membrane"/>
    <property type="evidence" value="ECO:0000314"/>
    <property type="project" value="UniProtKB"/>
</dbReference>
<dbReference type="GO" id="GO:0008289">
    <property type="term" value="F:lipid binding"/>
    <property type="evidence" value="ECO:0000314"/>
    <property type="project" value="UniProtKB"/>
</dbReference>
<dbReference type="GO" id="GO:0007342">
    <property type="term" value="P:fusion of sperm to egg plasma membrane involved in single fertilization"/>
    <property type="evidence" value="ECO:0000315"/>
    <property type="project" value="UniProtKB"/>
</dbReference>
<dbReference type="GO" id="GO:0051205">
    <property type="term" value="P:protein insertion into membrane"/>
    <property type="evidence" value="ECO:0000314"/>
    <property type="project" value="UniProtKB"/>
</dbReference>
<dbReference type="InterPro" id="IPR040326">
    <property type="entry name" value="HAP2/GCS1"/>
</dbReference>
<dbReference type="InterPro" id="IPR018928">
    <property type="entry name" value="HAP2/GCS1_dom"/>
</dbReference>
<dbReference type="PANTHER" id="PTHR31764:SF0">
    <property type="entry name" value="GENERATIVE CELL SPECIFIC-1_HAP2 DOMAIN-CONTAINING PROTEIN"/>
    <property type="match status" value="1"/>
</dbReference>
<dbReference type="PANTHER" id="PTHR31764">
    <property type="entry name" value="PROTEIN HAPLESS 2"/>
    <property type="match status" value="1"/>
</dbReference>
<dbReference type="Pfam" id="PF10699">
    <property type="entry name" value="HAP2-GCS1"/>
    <property type="match status" value="1"/>
</dbReference>
<name>HAP2_CHLRE</name>
<keyword id="KW-0002">3D-structure</keyword>
<keyword id="KW-1003">Cell membrane</keyword>
<keyword id="KW-0966">Cell projection</keyword>
<keyword id="KW-0968">Cytoplasmic vesicle</keyword>
<keyword id="KW-1015">Disulfide bond</keyword>
<keyword id="KW-0278">Fertilization</keyword>
<keyword id="KW-0325">Glycoprotein</keyword>
<keyword id="KW-0446">Lipid-binding</keyword>
<keyword id="KW-0472">Membrane</keyword>
<keyword id="KW-0732">Signal</keyword>
<keyword id="KW-0812">Transmembrane</keyword>
<keyword id="KW-1133">Transmembrane helix</keyword>
<feature type="signal peptide" evidence="1">
    <location>
        <begin position="1"/>
        <end position="22"/>
    </location>
</feature>
<feature type="chain" id="PRO_5002668632" description="Hapless 2">
    <location>
        <begin position="23"/>
        <end position="1139"/>
    </location>
</feature>
<feature type="topological domain" description="Extracellular" evidence="12">
    <location>
        <begin position="23"/>
        <end position="630"/>
    </location>
</feature>
<feature type="transmembrane region" description="Helical" evidence="1">
    <location>
        <begin position="631"/>
        <end position="651"/>
    </location>
</feature>
<feature type="topological domain" description="Cytoplasmic" evidence="12">
    <location>
        <begin position="652"/>
        <end position="1139"/>
    </location>
</feature>
<feature type="region of interest" description="Disordered" evidence="2">
    <location>
        <begin position="241"/>
        <end position="283"/>
    </location>
</feature>
<feature type="region of interest" description="Disordered" evidence="2">
    <location>
        <begin position="689"/>
        <end position="719"/>
    </location>
</feature>
<feature type="region of interest" description="Disordered" evidence="2">
    <location>
        <begin position="741"/>
        <end position="1139"/>
    </location>
</feature>
<feature type="compositionally biased region" description="Low complexity" evidence="2">
    <location>
        <begin position="241"/>
        <end position="272"/>
    </location>
</feature>
<feature type="compositionally biased region" description="Basic and acidic residues" evidence="2">
    <location>
        <begin position="753"/>
        <end position="767"/>
    </location>
</feature>
<feature type="compositionally biased region" description="Low complexity" evidence="2">
    <location>
        <begin position="770"/>
        <end position="789"/>
    </location>
</feature>
<feature type="compositionally biased region" description="Basic and acidic residues" evidence="2">
    <location>
        <begin position="829"/>
        <end position="851"/>
    </location>
</feature>
<feature type="compositionally biased region" description="Gly residues" evidence="2">
    <location>
        <begin position="868"/>
        <end position="884"/>
    </location>
</feature>
<feature type="compositionally biased region" description="Pro residues" evidence="2">
    <location>
        <begin position="887"/>
        <end position="904"/>
    </location>
</feature>
<feature type="compositionally biased region" description="Gly residues" evidence="2">
    <location>
        <begin position="919"/>
        <end position="943"/>
    </location>
</feature>
<feature type="compositionally biased region" description="Gly residues" evidence="2">
    <location>
        <begin position="955"/>
        <end position="965"/>
    </location>
</feature>
<feature type="compositionally biased region" description="Pro residues" evidence="2">
    <location>
        <begin position="978"/>
        <end position="991"/>
    </location>
</feature>
<feature type="compositionally biased region" description="Basic and acidic residues" evidence="2">
    <location>
        <begin position="1018"/>
        <end position="1029"/>
    </location>
</feature>
<feature type="compositionally biased region" description="Gly residues" evidence="2">
    <location>
        <begin position="1040"/>
        <end position="1049"/>
    </location>
</feature>
<feature type="compositionally biased region" description="Pro residues" evidence="2">
    <location>
        <begin position="1054"/>
        <end position="1067"/>
    </location>
</feature>
<feature type="compositionally biased region" description="Gly residues" evidence="2">
    <location>
        <begin position="1078"/>
        <end position="1096"/>
    </location>
</feature>
<feature type="compositionally biased region" description="Gly residues" evidence="2">
    <location>
        <begin position="1106"/>
        <end position="1118"/>
    </location>
</feature>
<feature type="glycosylation site" description="N-linked (GlcNAc...) asparagine" evidence="7 17">
    <location>
        <position position="497"/>
    </location>
</feature>
<feature type="glycosylation site" description="O-linked (GlcNAc...) threonine" evidence="7 17">
    <location>
        <position position="577"/>
    </location>
</feature>
<feature type="disulfide bond" evidence="7 17">
    <location>
        <begin position="33"/>
        <end position="44"/>
    </location>
</feature>
<feature type="disulfide bond" evidence="7 17">
    <location>
        <begin position="136"/>
        <end position="164"/>
    </location>
</feature>
<feature type="disulfide bond" evidence="7 17">
    <location>
        <begin position="147"/>
        <end position="210"/>
    </location>
</feature>
<feature type="disulfide bond" evidence="7 17">
    <location>
        <begin position="165"/>
        <end position="383"/>
    </location>
</feature>
<feature type="disulfide bond" evidence="7 17">
    <location>
        <begin position="167"/>
        <end position="190"/>
    </location>
</feature>
<feature type="disulfide bond" evidence="7 17">
    <location>
        <begin position="366"/>
        <end position="390"/>
    </location>
</feature>
<feature type="disulfide bond" evidence="7 17">
    <location>
        <begin position="475"/>
        <end position="482"/>
    </location>
</feature>
<feature type="disulfide bond" evidence="7 17">
    <location>
        <begin position="515"/>
        <end position="556"/>
    </location>
</feature>
<feature type="mutagenesis site" description="No effect on expression at the cell surface. Abolishes ability to mediate gamete fusion." evidence="7">
    <location>
        <begin position="184"/>
        <end position="186"/>
    </location>
</feature>
<feature type="mutagenesis site" description="No effect on expression at the cell surface. Abolishes ability to mediate gamete fusion." evidence="7">
    <original>RA</original>
    <variation>AR</variation>
    <location>
        <begin position="185"/>
        <end position="186"/>
    </location>
</feature>
<feature type="mutagenesis site" description="No effect on expression at the cell surface. Impairs ability to bind to lipid membranes. Abolishes ability to mediate gamete fusion." evidence="7">
    <original>R</original>
    <variation>A</variation>
    <variation>Q</variation>
    <location>
        <position position="185"/>
    </location>
</feature>
<feature type="mutagenesis site" description="No effect on expression at the cell surface. No effect on binding to lipid membranes and on ability to mediate gamete fusion." evidence="7">
    <original>R</original>
    <variation>K</variation>
    <location>
        <position position="185"/>
    </location>
</feature>
<feature type="mutagenesis site" description="No effect on expression at the cell surface. Nearly abolishes ability to bind lipid membranes. Decreases ability to mediate gamete fusion." evidence="7">
    <original>FW</original>
    <variation>AA</variation>
    <location>
        <begin position="192"/>
        <end position="193"/>
    </location>
</feature>
<feature type="mutagenesis site" description="Decreases expression at the cell surface. Decreases ability to mediate gamete fusion." evidence="6">
    <original>C</original>
    <variation>A</variation>
    <location>
        <position position="366"/>
    </location>
</feature>
<feature type="mutagenesis site" description="No effect on expression at the cell surface. No effect on ability to mediate gamete fusion." evidence="6">
    <original>D</original>
    <variation>A</variation>
    <location>
        <position position="367"/>
    </location>
</feature>
<feature type="mutagenesis site" description="No effect on expression at the cell surface. No effect on ability to mediate gamete fusion." evidence="6">
    <original>K</original>
    <variation>A</variation>
    <variation>M</variation>
    <variation>R</variation>
    <location>
        <position position="368"/>
    </location>
</feature>
<feature type="mutagenesis site" description="No effect on expression at the cell surface. No effect on ability to mediate gamete fusion." evidence="6">
    <original>G</original>
    <variation>A</variation>
    <location>
        <position position="372"/>
    </location>
</feature>
<feature type="mutagenesis site" description="Abolishes expression at the cell surface. Abolishes ability to mediate gamete fusion; when associated with P-394." evidence="6">
    <original>L</original>
    <variation>G</variation>
    <location>
        <position position="391"/>
    </location>
</feature>
<feature type="mutagenesis site" description="Abolishes expression at the cell surface. Abolishes ability to mediate gamete fusion; when associated with G-391." evidence="6">
    <original>Q</original>
    <variation>P</variation>
    <location>
        <position position="394"/>
    </location>
</feature>
<feature type="mutagenesis site" description="No effect on expression at the cell surface mating structure. Abolishes ability to mediate gamete fusion." evidence="6">
    <original>CC</original>
    <variation>SS</variation>
    <location>
        <begin position="661"/>
        <end position="662"/>
    </location>
</feature>
<feature type="mutagenesis site" description="No effect on expression at the cell surface mating structure. Slightly decreases ability to mediate gamete fusion." evidence="6">
    <original>C</original>
    <variation>S</variation>
    <location>
        <position position="661"/>
    </location>
</feature>
<feature type="mutagenesis site" description="No effect on expression at the cell surface mating structure. No effect on ability to mediate gamete fusion." evidence="6">
    <original>C</original>
    <variation>S</variation>
    <location>
        <position position="662"/>
    </location>
</feature>
<feature type="sequence conflict" description="In Ref. 3; BAE71145." evidence="12" ref="3">
    <original>L</original>
    <variation>Q</variation>
    <location>
        <position position="697"/>
    </location>
</feature>
<feature type="sequence conflict" description="In Ref. 3; BAE71145." evidence="12" ref="3">
    <original>P</original>
    <variation>PQ</variation>
    <location>
        <position position="708"/>
    </location>
</feature>
<feature type="sequence conflict" description="In Ref. 3; BAE71145." evidence="12" ref="3">
    <original>G</original>
    <variation>V</variation>
    <location>
        <position position="731"/>
    </location>
</feature>
<feature type="sequence conflict" description="In Ref. 3; BAE71145." evidence="12" ref="3">
    <original>G</original>
    <variation>A</variation>
    <location>
        <position position="747"/>
    </location>
</feature>
<feature type="strand" evidence="20">
    <location>
        <begin position="24"/>
        <end position="35"/>
    </location>
</feature>
<feature type="turn" evidence="20">
    <location>
        <begin position="37"/>
        <end position="39"/>
    </location>
</feature>
<feature type="strand" evidence="20">
    <location>
        <begin position="42"/>
        <end position="54"/>
    </location>
</feature>
<feature type="strand" evidence="20">
    <location>
        <begin position="63"/>
        <end position="73"/>
    </location>
</feature>
<feature type="strand" evidence="20">
    <location>
        <begin position="75"/>
        <end position="77"/>
    </location>
</feature>
<feature type="strand" evidence="20">
    <location>
        <begin position="97"/>
        <end position="105"/>
    </location>
</feature>
<feature type="strand" evidence="20">
    <location>
        <begin position="109"/>
        <end position="112"/>
    </location>
</feature>
<feature type="strand" evidence="20">
    <location>
        <begin position="114"/>
        <end position="122"/>
    </location>
</feature>
<feature type="strand" evidence="20">
    <location>
        <begin position="125"/>
        <end position="129"/>
    </location>
</feature>
<feature type="strand" evidence="18">
    <location>
        <begin position="132"/>
        <end position="134"/>
    </location>
</feature>
<feature type="strand" evidence="19">
    <location>
        <begin position="151"/>
        <end position="156"/>
    </location>
</feature>
<feature type="turn" evidence="20">
    <location>
        <begin position="158"/>
        <end position="161"/>
    </location>
</feature>
<feature type="strand" evidence="20">
    <location>
        <begin position="163"/>
        <end position="166"/>
    </location>
</feature>
<feature type="helix" evidence="20">
    <location>
        <begin position="169"/>
        <end position="176"/>
    </location>
</feature>
<feature type="helix" evidence="18">
    <location>
        <begin position="185"/>
        <end position="189"/>
    </location>
</feature>
<feature type="helix" evidence="20">
    <location>
        <begin position="192"/>
        <end position="194"/>
    </location>
</feature>
<feature type="helix" evidence="20">
    <location>
        <begin position="196"/>
        <end position="200"/>
    </location>
</feature>
<feature type="strand" evidence="20">
    <location>
        <begin position="206"/>
        <end position="212"/>
    </location>
</feature>
<feature type="strand" evidence="20">
    <location>
        <begin position="217"/>
        <end position="223"/>
    </location>
</feature>
<feature type="strand" evidence="20">
    <location>
        <begin position="227"/>
        <end position="229"/>
    </location>
</feature>
<feature type="strand" evidence="20">
    <location>
        <begin position="232"/>
        <end position="241"/>
    </location>
</feature>
<feature type="strand" evidence="20">
    <location>
        <begin position="280"/>
        <end position="288"/>
    </location>
</feature>
<feature type="strand" evidence="19">
    <location>
        <begin position="290"/>
        <end position="292"/>
    </location>
</feature>
<feature type="strand" evidence="20">
    <location>
        <begin position="294"/>
        <end position="296"/>
    </location>
</feature>
<feature type="strand" evidence="20">
    <location>
        <begin position="298"/>
        <end position="309"/>
    </location>
</feature>
<feature type="strand" evidence="20">
    <location>
        <begin position="323"/>
        <end position="327"/>
    </location>
</feature>
<feature type="helix" evidence="19">
    <location>
        <begin position="347"/>
        <end position="350"/>
    </location>
</feature>
<feature type="strand" evidence="20">
    <location>
        <begin position="352"/>
        <end position="354"/>
    </location>
</feature>
<feature type="helix" evidence="20">
    <location>
        <begin position="356"/>
        <end position="358"/>
    </location>
</feature>
<feature type="strand" evidence="19">
    <location>
        <begin position="361"/>
        <end position="363"/>
    </location>
</feature>
<feature type="strand" evidence="20">
    <location>
        <begin position="365"/>
        <end position="369"/>
    </location>
</feature>
<feature type="helix" evidence="20">
    <location>
        <begin position="373"/>
        <end position="377"/>
    </location>
</feature>
<feature type="helix" evidence="20">
    <location>
        <begin position="382"/>
        <end position="384"/>
    </location>
</feature>
<feature type="turn" evidence="20">
    <location>
        <begin position="387"/>
        <end position="390"/>
    </location>
</feature>
<feature type="helix" evidence="20">
    <location>
        <begin position="395"/>
        <end position="407"/>
    </location>
</feature>
<feature type="strand" evidence="20">
    <location>
        <begin position="413"/>
        <end position="415"/>
    </location>
</feature>
<feature type="helix" evidence="20">
    <location>
        <begin position="416"/>
        <end position="418"/>
    </location>
</feature>
<feature type="turn" evidence="20">
    <location>
        <begin position="419"/>
        <end position="421"/>
    </location>
</feature>
<feature type="helix" evidence="20">
    <location>
        <begin position="427"/>
        <end position="429"/>
    </location>
</feature>
<feature type="strand" evidence="20">
    <location>
        <begin position="437"/>
        <end position="440"/>
    </location>
</feature>
<feature type="strand" evidence="20">
    <location>
        <begin position="447"/>
        <end position="453"/>
    </location>
</feature>
<feature type="strand" evidence="20">
    <location>
        <begin position="455"/>
        <end position="462"/>
    </location>
</feature>
<feature type="strand" evidence="20">
    <location>
        <begin position="467"/>
        <end position="475"/>
    </location>
</feature>
<feature type="helix" evidence="20">
    <location>
        <begin position="477"/>
        <end position="479"/>
    </location>
</feature>
<feature type="strand" evidence="20">
    <location>
        <begin position="482"/>
        <end position="486"/>
    </location>
</feature>
<feature type="turn" evidence="20">
    <location>
        <begin position="487"/>
        <end position="489"/>
    </location>
</feature>
<feature type="strand" evidence="20">
    <location>
        <begin position="492"/>
        <end position="500"/>
    </location>
</feature>
<feature type="strand" evidence="20">
    <location>
        <begin position="502"/>
        <end position="504"/>
    </location>
</feature>
<feature type="strand" evidence="20">
    <location>
        <begin position="506"/>
        <end position="514"/>
    </location>
</feature>
<feature type="strand" evidence="20">
    <location>
        <begin position="525"/>
        <end position="529"/>
    </location>
</feature>
<feature type="strand" evidence="20">
    <location>
        <begin position="534"/>
        <end position="536"/>
    </location>
</feature>
<feature type="strand" evidence="20">
    <location>
        <begin position="541"/>
        <end position="543"/>
    </location>
</feature>
<feature type="strand" evidence="20">
    <location>
        <begin position="545"/>
        <end position="547"/>
    </location>
</feature>
<feature type="strand" evidence="20">
    <location>
        <begin position="551"/>
        <end position="561"/>
    </location>
</feature>
<feature type="strand" evidence="20">
    <location>
        <begin position="567"/>
        <end position="578"/>
    </location>
</feature>
<reference evidence="15" key="1">
    <citation type="journal article" date="2008" name="Genes Dev.">
        <title>The conserved plant sterility gene HAP2 functions after attachment of fusogenic membranes in Chlamydomonas and Plasmodium gametes.</title>
        <authorList>
            <person name="Liu Y."/>
            <person name="Tewari R."/>
            <person name="Ning J."/>
            <person name="Blagborough A.M."/>
            <person name="Garbom S."/>
            <person name="Pei J."/>
            <person name="Grishin N.V."/>
            <person name="Steele R.E."/>
            <person name="Sinden R.E."/>
            <person name="Snell W.J."/>
            <person name="Billker O."/>
        </authorList>
    </citation>
    <scope>NUCLEOTIDE SEQUENCE [MRNA]</scope>
    <scope>FUNCTION</scope>
    <scope>DISRUPTION PHENOTYPE</scope>
    <source>
        <strain evidence="15">6145C</strain>
    </source>
</reference>
<reference key="2">
    <citation type="journal article" date="2007" name="Science">
        <title>The Chlamydomonas genome reveals the evolution of key animal and plant functions.</title>
        <authorList>
            <person name="Merchant S.S."/>
            <person name="Prochnik S.E."/>
            <person name="Vallon O."/>
            <person name="Harris E.H."/>
            <person name="Karpowicz S.J."/>
            <person name="Witman G.B."/>
            <person name="Terry A."/>
            <person name="Salamov A."/>
            <person name="Fritz-Laylin L.K."/>
            <person name="Marechal-Drouard L."/>
            <person name="Marshall W.F."/>
            <person name="Qu L.H."/>
            <person name="Nelson D.R."/>
            <person name="Sanderfoot A.A."/>
            <person name="Spalding M.H."/>
            <person name="Kapitonov V.V."/>
            <person name="Ren Q."/>
            <person name="Ferris P."/>
            <person name="Lindquist E."/>
            <person name="Shapiro H."/>
            <person name="Lucas S.M."/>
            <person name="Grimwood J."/>
            <person name="Schmutz J."/>
            <person name="Cardol P."/>
            <person name="Cerutti H."/>
            <person name="Chanfreau G."/>
            <person name="Chen C.L."/>
            <person name="Cognat V."/>
            <person name="Croft M.T."/>
            <person name="Dent R."/>
            <person name="Dutcher S."/>
            <person name="Fernandez E."/>
            <person name="Fukuzawa H."/>
            <person name="Gonzalez-Ballester D."/>
            <person name="Gonzalez-Halphen D."/>
            <person name="Hallmann A."/>
            <person name="Hanikenne M."/>
            <person name="Hippler M."/>
            <person name="Inwood W."/>
            <person name="Jabbari K."/>
            <person name="Kalanon M."/>
            <person name="Kuras R."/>
            <person name="Lefebvre P.A."/>
            <person name="Lemaire S.D."/>
            <person name="Lobanov A.V."/>
            <person name="Lohr M."/>
            <person name="Manuell A."/>
            <person name="Meier I."/>
            <person name="Mets L."/>
            <person name="Mittag M."/>
            <person name="Mittelmeier T."/>
            <person name="Moroney J.V."/>
            <person name="Moseley J."/>
            <person name="Napoli C."/>
            <person name="Nedelcu A.M."/>
            <person name="Niyogi K."/>
            <person name="Novoselov S.V."/>
            <person name="Paulsen I.T."/>
            <person name="Pazour G.J."/>
            <person name="Purton S."/>
            <person name="Ral J.P."/>
            <person name="Riano-Pachon D.M."/>
            <person name="Riekhof W."/>
            <person name="Rymarquis L."/>
            <person name="Schroda M."/>
            <person name="Stern D."/>
            <person name="Umen J."/>
            <person name="Willows R."/>
            <person name="Wilson N."/>
            <person name="Zimmer S.L."/>
            <person name="Allmer J."/>
            <person name="Balk J."/>
            <person name="Bisova K."/>
            <person name="Chen C.J."/>
            <person name="Elias M."/>
            <person name="Gendler K."/>
            <person name="Hauser C."/>
            <person name="Lamb M.R."/>
            <person name="Ledford H."/>
            <person name="Long J.C."/>
            <person name="Minagawa J."/>
            <person name="Page M.D."/>
            <person name="Pan J."/>
            <person name="Pootakham W."/>
            <person name="Roje S."/>
            <person name="Rose A."/>
            <person name="Stahlberg E."/>
            <person name="Terauchi A.M."/>
            <person name="Yang P."/>
            <person name="Ball S."/>
            <person name="Bowler C."/>
            <person name="Dieckmann C.L."/>
            <person name="Gladyshev V.N."/>
            <person name="Green P."/>
            <person name="Jorgensen R."/>
            <person name="Mayfield S."/>
            <person name="Mueller-Roeber B."/>
            <person name="Rajamani S."/>
            <person name="Sayre R.T."/>
            <person name="Brokstein P."/>
            <person name="Dubchak I."/>
            <person name="Goodstein D."/>
            <person name="Hornick L."/>
            <person name="Huang Y.W."/>
            <person name="Jhaveri J."/>
            <person name="Luo Y."/>
            <person name="Martinez D."/>
            <person name="Ngau W.C."/>
            <person name="Otillar B."/>
            <person name="Poliakov A."/>
            <person name="Porter A."/>
            <person name="Szajkowski L."/>
            <person name="Werner G."/>
            <person name="Zhou K."/>
            <person name="Grigoriev I.V."/>
            <person name="Rokhsar D.S."/>
            <person name="Grossman A.R."/>
        </authorList>
    </citation>
    <scope>NUCLEOTIDE SEQUENCE [LARGE SCALE GENOMIC DNA]</scope>
    <source>
        <strain>CC-503</strain>
    </source>
</reference>
<reference evidence="16" key="3">
    <citation type="journal article" date="2006" name="Nat. Cell Biol.">
        <title>GENERATIVE CELL SPECIFIC 1 is essential for angiosperm fertilization.</title>
        <authorList>
            <person name="Mori T."/>
            <person name="Kuroiwa H."/>
            <person name="Higashiyama T."/>
            <person name="Kuroiwa T."/>
        </authorList>
    </citation>
    <scope>NUCLEOTIDE SEQUENCE [MRNA] OF 1-747</scope>
    <scope>DEVELOPMENTAL STAGE</scope>
</reference>
<reference evidence="15" key="4">
    <citation type="journal article" date="2010" name="Development">
        <title>Membrane fusion triggers rapid degradation of two gamete-specific, fusion-essential proteins in a membrane block to polygamy in Chlamydomonas.</title>
        <authorList>
            <person name="Liu Y."/>
            <person name="Misamore M.J."/>
            <person name="Snell W.J."/>
        </authorList>
    </citation>
    <scope>FUNCTION</scope>
    <scope>SUBCELLULAR LOCATION</scope>
    <scope>GLYCOSYLATION</scope>
    <scope>PROTEOLYTIC DEGRADATION</scope>
    <source>
        <strain evidence="15">6145C</strain>
    </source>
</reference>
<reference key="5">
    <citation type="journal article" date="2010" name="Trends Cell Biol.">
        <title>Is HAP2-GCS1 an ancestral gamete fusogen?</title>
        <authorList>
            <person name="Wong J.L."/>
            <person name="Johnson M.A."/>
        </authorList>
    </citation>
    <scope>REVIEW</scope>
</reference>
<reference key="6">
    <citation type="journal article" date="2015" name="Development">
        <title>The cytoplasmic domain of the gamete membrane fusion protein HAP2 targets the protein to the fusion site in Chlamydomonas and regulates the fusion reaction.</title>
        <authorList>
            <person name="Liu Y."/>
            <person name="Pei J."/>
            <person name="Grishin N."/>
            <person name="Snell W.J."/>
        </authorList>
    </citation>
    <scope>FUNCTION</scope>
    <scope>SUBCELLULAR LOCATION</scope>
    <scope>DOMAIN</scope>
    <scope>DEVELOPMENTAL STAGE</scope>
    <scope>MUTAGENESIS OF CYS-366; ASP-367; LYS-368; GLY-372; LEU-391; GLN-394; CYS-661; 661-CYS-CYS-662 AND CYS-662</scope>
</reference>
<reference key="7">
    <citation type="journal article" date="2017" name="Cell">
        <title>The Ancient Gamete Fusogen HAP2 Is a Eukaryotic Class II Fusion Protein.</title>
        <authorList>
            <person name="Fedry J."/>
            <person name="Liu Y."/>
            <person name="Pehau-Arnaudet G."/>
            <person name="Pei J."/>
            <person name="Li W."/>
            <person name="Tortorici M.A."/>
            <person name="Traincard F."/>
            <person name="Meola A."/>
            <person name="Bricogne G."/>
            <person name="Grishin N.V."/>
            <person name="Snell W.J."/>
            <person name="Rey F.A."/>
            <person name="Krey T."/>
        </authorList>
    </citation>
    <scope>X-RAY CRYSTALLOGRAPHY (3.30 ANGSTROMS) OF 23-592</scope>
    <scope>FUNCTION</scope>
    <scope>SUBUNIT</scope>
    <scope>SUBCELLULAR LOCATION</scope>
    <scope>TOPOLOGY</scope>
    <scope>DEVELOPMENTAL STAGE</scope>
    <scope>MUTAGENESIS OF 184-THR--ALA-186; ARG-185 AND 192-PHE-TRP-193</scope>
    <scope>DISULFIDE BONDS</scope>
    <scope>GLYCOSYLATION AT ASN-497 AND THR-577</scope>
</reference>
<sequence>MCRAIAVALIVYLAQHYILAHAEVIASGRLEKCVVDGVTEELDCQEKVVVTLTVGNGQSLQTEALEFSLSCLNSPDGRCPCSCSAADPTCACRDLAAPLRVSLTKSPLWASYPLQYLSSFNWKPLEVILRPSNKVCKDGDWEDSPTCGWFSQGGVRVADSQGFCCECSSSQVWDDTFGSSKERTRANLDCDFWSDPLDILIGRKPVSAHCLTFDPQWYSGYELGAASLQFEIAITVEVPTAPSPTTATTSATPRTNNSSSANSTNSTNSPAPQFLSPPAPSTREVLHLGPSVPLASSASRLLSAKLLGDLAMYTQLPAISNQVLMVPQPPAAAAATGSPLDATLATNRSAWMLLDKTMLSMDGLACDKVGTGFSAFRYQPSGCGRAPQACLSGQLKDLWEADLARIADGRVPLYMITRFTGGSDTTLQSFSGGPLSFALPVTSHSQSLVTLSVAADGVRLVTNRSPGKITGAAVCRFAGTSCGGFEAVAARGYIYVNITNTGRLDSDYTLTVSNCSSNVRPIEARTLAVRAGSAASLDPPMELYVEDQAAAAARTCTVSLYDSVGAVTDSLTLSFYTNATQLVVKPSGGYNGTGDGAGVKRNGTDCSTACTNPIDVLCFVTKKCWSKFGRLLGIIGGALVGLGLLAVALKFGWLASLAASCCGGGGGAAAGGAGGGMGLGTGGGGGCFGGGQQQQQLPPAASHAMSPPQQQQRSHAEVAAGAAVAGAGAAGAAAAVLGAKHGGGGGGARGKQQHADTRHLQDRDSRAIDGGASIGSSSAGGSSSLSSYSQPREAGGRLLQPPAAAVFVPEGGGGGAAGDEGARAQSSDWDARGRSPRVADEHGSPRQRYDGVRQSPYMVSANPYDGWYDGGSGGGGGGGGGGYGREAPPPQGPPPHPVGAPPPPPRRRSLWERMWLQRPGGGGGGGGGGGGGGGGGSGGGVDQHGGRSCADAARRGGGGPGGMRGVEGLMSNGGRPNGPHPHAPPPPPPPQQQQQQQRQRRSFLESLTAMMTLPWGGGREEEAGGDRRGGGRGGAAAAHGGRGAGGGRGHPPSIGSPPPGPLQPPEYGPQGGQARRWGAGGGRGGVGGDGGGGGVGAAAYVQLSTGGRGGGGGGGRGRGGGREGPTWHNPVYDWQAPPK</sequence>
<proteinExistence type="evidence at protein level"/>